<comment type="function">
    <text evidence="1">Catalyzes the conversion of L-lactate to pyruvate. Is coupled to the respiratory chain.</text>
</comment>
<comment type="catalytic activity">
    <reaction evidence="1">
        <text>(S)-lactate + A = pyruvate + AH2</text>
        <dbReference type="Rhea" id="RHEA:45816"/>
        <dbReference type="ChEBI" id="CHEBI:13193"/>
        <dbReference type="ChEBI" id="CHEBI:15361"/>
        <dbReference type="ChEBI" id="CHEBI:16651"/>
        <dbReference type="ChEBI" id="CHEBI:17499"/>
    </reaction>
</comment>
<comment type="cofactor">
    <cofactor evidence="1">
        <name>FMN</name>
        <dbReference type="ChEBI" id="CHEBI:58210"/>
    </cofactor>
</comment>
<comment type="subcellular location">
    <subcellularLocation>
        <location evidence="1">Cell inner membrane</location>
        <topology evidence="1">Peripheral membrane protein</topology>
    </subcellularLocation>
</comment>
<comment type="similarity">
    <text evidence="1">Belongs to the FMN-dependent alpha-hydroxy acid dehydrogenase family.</text>
</comment>
<accession>Q8PR33</accession>
<evidence type="ECO:0000255" key="1">
    <source>
        <dbReference type="HAMAP-Rule" id="MF_01559"/>
    </source>
</evidence>
<dbReference type="EC" id="1.1.-.-" evidence="1"/>
<dbReference type="EMBL" id="AE008923">
    <property type="protein sequence ID" value="AAM35025.1"/>
    <property type="molecule type" value="Genomic_DNA"/>
</dbReference>
<dbReference type="RefSeq" id="WP_011050112.1">
    <property type="nucleotide sequence ID" value="NC_003919.1"/>
</dbReference>
<dbReference type="SMR" id="Q8PR33"/>
<dbReference type="GeneID" id="66909343"/>
<dbReference type="KEGG" id="xac:XAC0133"/>
<dbReference type="eggNOG" id="COG1304">
    <property type="taxonomic scope" value="Bacteria"/>
</dbReference>
<dbReference type="HOGENOM" id="CLU_020639_0_0_6"/>
<dbReference type="Proteomes" id="UP000000576">
    <property type="component" value="Chromosome"/>
</dbReference>
<dbReference type="GO" id="GO:0005886">
    <property type="term" value="C:plasma membrane"/>
    <property type="evidence" value="ECO:0007669"/>
    <property type="project" value="UniProtKB-SubCell"/>
</dbReference>
<dbReference type="GO" id="GO:0010181">
    <property type="term" value="F:FMN binding"/>
    <property type="evidence" value="ECO:0007669"/>
    <property type="project" value="InterPro"/>
</dbReference>
<dbReference type="GO" id="GO:0004459">
    <property type="term" value="F:L-lactate dehydrogenase activity"/>
    <property type="evidence" value="ECO:0007669"/>
    <property type="project" value="UniProtKB-UniRule"/>
</dbReference>
<dbReference type="GO" id="GO:0009060">
    <property type="term" value="P:aerobic respiration"/>
    <property type="evidence" value="ECO:0007669"/>
    <property type="project" value="TreeGrafter"/>
</dbReference>
<dbReference type="GO" id="GO:0006089">
    <property type="term" value="P:lactate metabolic process"/>
    <property type="evidence" value="ECO:0007669"/>
    <property type="project" value="UniProtKB-UniRule"/>
</dbReference>
<dbReference type="CDD" id="cd02809">
    <property type="entry name" value="alpha_hydroxyacid_oxid_FMN"/>
    <property type="match status" value="1"/>
</dbReference>
<dbReference type="FunFam" id="3.20.20.70:FF:000029">
    <property type="entry name" value="L-lactate dehydrogenase"/>
    <property type="match status" value="1"/>
</dbReference>
<dbReference type="Gene3D" id="3.20.20.70">
    <property type="entry name" value="Aldolase class I"/>
    <property type="match status" value="1"/>
</dbReference>
<dbReference type="HAMAP" id="MF_01559">
    <property type="entry name" value="L_lact_dehydr"/>
    <property type="match status" value="1"/>
</dbReference>
<dbReference type="InterPro" id="IPR013785">
    <property type="entry name" value="Aldolase_TIM"/>
</dbReference>
<dbReference type="InterPro" id="IPR012133">
    <property type="entry name" value="Alpha-hydoxy_acid_DH_FMN"/>
</dbReference>
<dbReference type="InterPro" id="IPR000262">
    <property type="entry name" value="FMN-dep_DH"/>
</dbReference>
<dbReference type="InterPro" id="IPR037396">
    <property type="entry name" value="FMN_HAD"/>
</dbReference>
<dbReference type="InterPro" id="IPR008259">
    <property type="entry name" value="FMN_hydac_DH_AS"/>
</dbReference>
<dbReference type="InterPro" id="IPR020920">
    <property type="entry name" value="LldD"/>
</dbReference>
<dbReference type="NCBIfam" id="NF033901">
    <property type="entry name" value="L_lactate_LldD"/>
    <property type="match status" value="1"/>
</dbReference>
<dbReference type="NCBIfam" id="NF008398">
    <property type="entry name" value="PRK11197.1"/>
    <property type="match status" value="1"/>
</dbReference>
<dbReference type="PANTHER" id="PTHR10578:SF85">
    <property type="entry name" value="L-LACTATE DEHYDROGENASE"/>
    <property type="match status" value="1"/>
</dbReference>
<dbReference type="PANTHER" id="PTHR10578">
    <property type="entry name" value="S -2-HYDROXY-ACID OXIDASE-RELATED"/>
    <property type="match status" value="1"/>
</dbReference>
<dbReference type="Pfam" id="PF01070">
    <property type="entry name" value="FMN_dh"/>
    <property type="match status" value="1"/>
</dbReference>
<dbReference type="PIRSF" id="PIRSF000138">
    <property type="entry name" value="Al-hdrx_acd_dh"/>
    <property type="match status" value="1"/>
</dbReference>
<dbReference type="SUPFAM" id="SSF51395">
    <property type="entry name" value="FMN-linked oxidoreductases"/>
    <property type="match status" value="1"/>
</dbReference>
<dbReference type="PROSITE" id="PS00557">
    <property type="entry name" value="FMN_HYDROXY_ACID_DH_1"/>
    <property type="match status" value="1"/>
</dbReference>
<dbReference type="PROSITE" id="PS51349">
    <property type="entry name" value="FMN_HYDROXY_ACID_DH_2"/>
    <property type="match status" value="1"/>
</dbReference>
<proteinExistence type="inferred from homology"/>
<feature type="chain" id="PRO_0000206354" description="L-lactate dehydrogenase">
    <location>
        <begin position="1"/>
        <end position="388"/>
    </location>
</feature>
<feature type="domain" description="FMN hydroxy acid dehydrogenase" evidence="1">
    <location>
        <begin position="1"/>
        <end position="380"/>
    </location>
</feature>
<feature type="active site" description="Proton acceptor" evidence="1">
    <location>
        <position position="275"/>
    </location>
</feature>
<feature type="binding site" evidence="1">
    <location>
        <position position="24"/>
    </location>
    <ligand>
        <name>substrate</name>
    </ligand>
</feature>
<feature type="binding site" evidence="1">
    <location>
        <position position="106"/>
    </location>
    <ligand>
        <name>FMN</name>
        <dbReference type="ChEBI" id="CHEBI:58210"/>
    </ligand>
</feature>
<feature type="binding site" evidence="1">
    <location>
        <position position="127"/>
    </location>
    <ligand>
        <name>FMN</name>
        <dbReference type="ChEBI" id="CHEBI:58210"/>
    </ligand>
</feature>
<feature type="binding site" evidence="1">
    <location>
        <position position="129"/>
    </location>
    <ligand>
        <name>substrate</name>
    </ligand>
</feature>
<feature type="binding site" evidence="1">
    <location>
        <position position="155"/>
    </location>
    <ligand>
        <name>FMN</name>
        <dbReference type="ChEBI" id="CHEBI:58210"/>
    </ligand>
</feature>
<feature type="binding site" evidence="1">
    <location>
        <position position="164"/>
    </location>
    <ligand>
        <name>substrate</name>
    </ligand>
</feature>
<feature type="binding site" evidence="1">
    <location>
        <position position="251"/>
    </location>
    <ligand>
        <name>FMN</name>
        <dbReference type="ChEBI" id="CHEBI:58210"/>
    </ligand>
</feature>
<feature type="binding site" evidence="1">
    <location>
        <position position="278"/>
    </location>
    <ligand>
        <name>substrate</name>
    </ligand>
</feature>
<feature type="binding site" evidence="1">
    <location>
        <begin position="306"/>
        <end position="330"/>
    </location>
    <ligand>
        <name>FMN</name>
        <dbReference type="ChEBI" id="CHEBI:58210"/>
    </ligand>
</feature>
<organism>
    <name type="scientific">Xanthomonas axonopodis pv. citri (strain 306)</name>
    <dbReference type="NCBI Taxonomy" id="190486"/>
    <lineage>
        <taxon>Bacteria</taxon>
        <taxon>Pseudomonadati</taxon>
        <taxon>Pseudomonadota</taxon>
        <taxon>Gammaproteobacteria</taxon>
        <taxon>Lysobacterales</taxon>
        <taxon>Lysobacteraceae</taxon>
        <taxon>Xanthomonas</taxon>
    </lineage>
</organism>
<gene>
    <name evidence="1" type="primary">lldD</name>
    <name type="ordered locus">XAC0133</name>
</gene>
<sequence>MIISAASDYRAAAEARLPPFLFHYIDGGAYAEHTLRRNVSDLADVALRQRVLRNMSDLRLSTELFGETLAMPVALAPVGLTGMYARRGEVQAARAAAARGIPFTLSTVSVCPIEEVAPAIERPMWFQLYVLKDRGFMRNALERAKAAGVTTLVFTVDMPTPGARYRDAHSGMSGPNASLRRMLQAVTHPRWAWDVGLLGKPHDLGNISAYRGSPTGLQDYIGWLGANFDPSIAWKDLEWIREFWTGPMVIKGILDPEDARDAVRFGADGIVVSNHGGRQLDGVLSSARALPAIADAVKGELKILADSGIRSGLDVVRMLALGADAVLLGRAFVYALAAAGQAGVENLLTLIEKEMRVAMTLTGTHSIADISADALSRVTRERADAISP</sequence>
<keyword id="KW-0997">Cell inner membrane</keyword>
<keyword id="KW-1003">Cell membrane</keyword>
<keyword id="KW-0285">Flavoprotein</keyword>
<keyword id="KW-0288">FMN</keyword>
<keyword id="KW-0472">Membrane</keyword>
<keyword id="KW-0560">Oxidoreductase</keyword>
<name>LLDD_XANAC</name>
<reference key="1">
    <citation type="journal article" date="2002" name="Nature">
        <title>Comparison of the genomes of two Xanthomonas pathogens with differing host specificities.</title>
        <authorList>
            <person name="da Silva A.C.R."/>
            <person name="Ferro J.A."/>
            <person name="Reinach F.C."/>
            <person name="Farah C.S."/>
            <person name="Furlan L.R."/>
            <person name="Quaggio R.B."/>
            <person name="Monteiro-Vitorello C.B."/>
            <person name="Van Sluys M.A."/>
            <person name="Almeida N.F. Jr."/>
            <person name="Alves L.M.C."/>
            <person name="do Amaral A.M."/>
            <person name="Bertolini M.C."/>
            <person name="Camargo L.E.A."/>
            <person name="Camarotte G."/>
            <person name="Cannavan F."/>
            <person name="Cardozo J."/>
            <person name="Chambergo F."/>
            <person name="Ciapina L.P."/>
            <person name="Cicarelli R.M.B."/>
            <person name="Coutinho L.L."/>
            <person name="Cursino-Santos J.R."/>
            <person name="El-Dorry H."/>
            <person name="Faria J.B."/>
            <person name="Ferreira A.J.S."/>
            <person name="Ferreira R.C.C."/>
            <person name="Ferro M.I.T."/>
            <person name="Formighieri E.F."/>
            <person name="Franco M.C."/>
            <person name="Greggio C.C."/>
            <person name="Gruber A."/>
            <person name="Katsuyama A.M."/>
            <person name="Kishi L.T."/>
            <person name="Leite R.P."/>
            <person name="Lemos E.G.M."/>
            <person name="Lemos M.V.F."/>
            <person name="Locali E.C."/>
            <person name="Machado M.A."/>
            <person name="Madeira A.M.B.N."/>
            <person name="Martinez-Rossi N.M."/>
            <person name="Martins E.C."/>
            <person name="Meidanis J."/>
            <person name="Menck C.F.M."/>
            <person name="Miyaki C.Y."/>
            <person name="Moon D.H."/>
            <person name="Moreira L.M."/>
            <person name="Novo M.T.M."/>
            <person name="Okura V.K."/>
            <person name="Oliveira M.C."/>
            <person name="Oliveira V.R."/>
            <person name="Pereira H.A."/>
            <person name="Rossi A."/>
            <person name="Sena J.A.D."/>
            <person name="Silva C."/>
            <person name="de Souza R.F."/>
            <person name="Spinola L.A.F."/>
            <person name="Takita M.A."/>
            <person name="Tamura R.E."/>
            <person name="Teixeira E.C."/>
            <person name="Tezza R.I.D."/>
            <person name="Trindade dos Santos M."/>
            <person name="Truffi D."/>
            <person name="Tsai S.M."/>
            <person name="White F.F."/>
            <person name="Setubal J.C."/>
            <person name="Kitajima J.P."/>
        </authorList>
    </citation>
    <scope>NUCLEOTIDE SEQUENCE [LARGE SCALE GENOMIC DNA]</scope>
    <source>
        <strain>306</strain>
    </source>
</reference>
<protein>
    <recommendedName>
        <fullName evidence="1">L-lactate dehydrogenase</fullName>
        <ecNumber evidence="1">1.1.-.-</ecNumber>
    </recommendedName>
</protein>